<gene>
    <name type="ordered locus">SH1116</name>
</gene>
<protein>
    <recommendedName>
        <fullName>UPF0754 membrane protein SH1116</fullName>
    </recommendedName>
</protein>
<feature type="chain" id="PRO_0000388321" description="UPF0754 membrane protein SH1116">
    <location>
        <begin position="1"/>
        <end position="378"/>
    </location>
</feature>
<feature type="transmembrane region" description="Helical" evidence="2">
    <location>
        <begin position="4"/>
        <end position="24"/>
    </location>
</feature>
<feature type="transmembrane region" description="Helical" evidence="2">
    <location>
        <begin position="358"/>
        <end position="378"/>
    </location>
</feature>
<keyword id="KW-1003">Cell membrane</keyword>
<keyword id="KW-0472">Membrane</keyword>
<keyword id="KW-0812">Transmembrane</keyword>
<keyword id="KW-1133">Transmembrane helix</keyword>
<comment type="subcellular location">
    <subcellularLocation>
        <location evidence="1">Cell membrane</location>
        <topology evidence="1">Multi-pass membrane protein</topology>
    </subcellularLocation>
</comment>
<comment type="similarity">
    <text evidence="3">Belongs to the UPF0754 family.</text>
</comment>
<organism>
    <name type="scientific">Staphylococcus haemolyticus (strain JCSC1435)</name>
    <dbReference type="NCBI Taxonomy" id="279808"/>
    <lineage>
        <taxon>Bacteria</taxon>
        <taxon>Bacillati</taxon>
        <taxon>Bacillota</taxon>
        <taxon>Bacilli</taxon>
        <taxon>Bacillales</taxon>
        <taxon>Staphylococcaceae</taxon>
        <taxon>Staphylococcus</taxon>
    </lineage>
</organism>
<sequence>MQAFLVILFMVVVGAVIGGVTNVIAIRMLFHPFKPYYIFKMRIPFTPGLIPKRREEIATKIGQVIEEHLITESVILQKLNEPNTREAINDLVIKQLSKLKSDDATIRKFANQFDFDLDLDDLINNKLDKTIINKLNNYYYDKQATSINEILPADVITMVDEKLDQAGDLIRERARNYLSSDKGARDIYDMLDTFFAEKGKIVGLLQMFMTKESIAERVQHELIRLTRHPKAKVIIDKVIRDEYETLKSQPLSHVVKEEQFTNISESLVHLVITNLQLNEKMDTPISKLTPKLVDQIQVGVANTITDLIIKQASNHLSTIMTKINLRQMVENQINTFDLDYIERLIIEIANKELKLIMSLGFILGGIIGFFQGIVAIFV</sequence>
<evidence type="ECO:0000250" key="1"/>
<evidence type="ECO:0000255" key="2"/>
<evidence type="ECO:0000305" key="3"/>
<dbReference type="EMBL" id="AP006716">
    <property type="protein sequence ID" value="BAE04425.1"/>
    <property type="molecule type" value="Genomic_DNA"/>
</dbReference>
<dbReference type="RefSeq" id="WP_011275417.1">
    <property type="nucleotide sequence ID" value="NC_007168.1"/>
</dbReference>
<dbReference type="SMR" id="Q4L7F0"/>
<dbReference type="KEGG" id="sha:SH1116"/>
<dbReference type="eggNOG" id="COG4399">
    <property type="taxonomic scope" value="Bacteria"/>
</dbReference>
<dbReference type="HOGENOM" id="CLU_042384_0_0_9"/>
<dbReference type="OrthoDB" id="9787430at2"/>
<dbReference type="Proteomes" id="UP000000543">
    <property type="component" value="Chromosome"/>
</dbReference>
<dbReference type="GO" id="GO:0005886">
    <property type="term" value="C:plasma membrane"/>
    <property type="evidence" value="ECO:0007669"/>
    <property type="project" value="UniProtKB-SubCell"/>
</dbReference>
<dbReference type="InterPro" id="IPR007383">
    <property type="entry name" value="DUF445"/>
</dbReference>
<dbReference type="InterPro" id="IPR016991">
    <property type="entry name" value="UCP032178"/>
</dbReference>
<dbReference type="PANTHER" id="PTHR35791">
    <property type="entry name" value="UPF0754 MEMBRANE PROTEIN YHEB"/>
    <property type="match status" value="1"/>
</dbReference>
<dbReference type="PANTHER" id="PTHR35791:SF1">
    <property type="entry name" value="UPF0754 MEMBRANE PROTEIN YHEB"/>
    <property type="match status" value="1"/>
</dbReference>
<dbReference type="Pfam" id="PF04286">
    <property type="entry name" value="DUF445"/>
    <property type="match status" value="1"/>
</dbReference>
<dbReference type="PIRSF" id="PIRSF032178">
    <property type="entry name" value="UCP032178"/>
    <property type="match status" value="1"/>
</dbReference>
<name>Y1116_STAHJ</name>
<accession>Q4L7F0</accession>
<reference key="1">
    <citation type="journal article" date="2005" name="J. Bacteriol.">
        <title>Whole-genome sequencing of Staphylococcus haemolyticus uncovers the extreme plasticity of its genome and the evolution of human-colonizing staphylococcal species.</title>
        <authorList>
            <person name="Takeuchi F."/>
            <person name="Watanabe S."/>
            <person name="Baba T."/>
            <person name="Yuzawa H."/>
            <person name="Ito T."/>
            <person name="Morimoto Y."/>
            <person name="Kuroda M."/>
            <person name="Cui L."/>
            <person name="Takahashi M."/>
            <person name="Ankai A."/>
            <person name="Baba S."/>
            <person name="Fukui S."/>
            <person name="Lee J.C."/>
            <person name="Hiramatsu K."/>
        </authorList>
    </citation>
    <scope>NUCLEOTIDE SEQUENCE [LARGE SCALE GENOMIC DNA]</scope>
    <source>
        <strain>JCSC1435</strain>
    </source>
</reference>
<proteinExistence type="inferred from homology"/>